<dbReference type="EMBL" id="CP001407">
    <property type="protein sequence ID" value="ACO30398.1"/>
    <property type="molecule type" value="Genomic_DNA"/>
</dbReference>
<dbReference type="RefSeq" id="WP_000064678.1">
    <property type="nucleotide sequence ID" value="NZ_CP009318.1"/>
</dbReference>
<dbReference type="SMR" id="C1F0N1"/>
<dbReference type="GeneID" id="45025138"/>
<dbReference type="KEGG" id="bcx:BCA_5453"/>
<dbReference type="PATRIC" id="fig|572264.18.peg.5375"/>
<dbReference type="Proteomes" id="UP000002210">
    <property type="component" value="Chromosome"/>
</dbReference>
<dbReference type="GO" id="GO:0005886">
    <property type="term" value="C:plasma membrane"/>
    <property type="evidence" value="ECO:0007669"/>
    <property type="project" value="UniProtKB-SubCell"/>
</dbReference>
<dbReference type="GO" id="GO:0045259">
    <property type="term" value="C:proton-transporting ATP synthase complex"/>
    <property type="evidence" value="ECO:0007669"/>
    <property type="project" value="UniProtKB-KW"/>
</dbReference>
<dbReference type="GO" id="GO:0046933">
    <property type="term" value="F:proton-transporting ATP synthase activity, rotational mechanism"/>
    <property type="evidence" value="ECO:0007669"/>
    <property type="project" value="UniProtKB-UniRule"/>
</dbReference>
<dbReference type="Gene3D" id="1.10.520.20">
    <property type="entry name" value="N-terminal domain of the delta subunit of the F1F0-ATP synthase"/>
    <property type="match status" value="1"/>
</dbReference>
<dbReference type="HAMAP" id="MF_01416">
    <property type="entry name" value="ATP_synth_delta_bact"/>
    <property type="match status" value="1"/>
</dbReference>
<dbReference type="InterPro" id="IPR026015">
    <property type="entry name" value="ATP_synth_OSCP/delta_N_sf"/>
</dbReference>
<dbReference type="InterPro" id="IPR020781">
    <property type="entry name" value="ATPase_OSCP/d_CS"/>
</dbReference>
<dbReference type="InterPro" id="IPR000711">
    <property type="entry name" value="ATPase_OSCP/dsu"/>
</dbReference>
<dbReference type="NCBIfam" id="TIGR01145">
    <property type="entry name" value="ATP_synt_delta"/>
    <property type="match status" value="1"/>
</dbReference>
<dbReference type="NCBIfam" id="NF004402">
    <property type="entry name" value="PRK05758.2-2"/>
    <property type="match status" value="1"/>
</dbReference>
<dbReference type="NCBIfam" id="NF004403">
    <property type="entry name" value="PRK05758.2-4"/>
    <property type="match status" value="1"/>
</dbReference>
<dbReference type="PANTHER" id="PTHR11910">
    <property type="entry name" value="ATP SYNTHASE DELTA CHAIN"/>
    <property type="match status" value="1"/>
</dbReference>
<dbReference type="Pfam" id="PF00213">
    <property type="entry name" value="OSCP"/>
    <property type="match status" value="1"/>
</dbReference>
<dbReference type="PRINTS" id="PR00125">
    <property type="entry name" value="ATPASEDELTA"/>
</dbReference>
<dbReference type="SUPFAM" id="SSF47928">
    <property type="entry name" value="N-terminal domain of the delta subunit of the F1F0-ATP synthase"/>
    <property type="match status" value="1"/>
</dbReference>
<dbReference type="PROSITE" id="PS00389">
    <property type="entry name" value="ATPASE_DELTA"/>
    <property type="match status" value="1"/>
</dbReference>
<keyword id="KW-0066">ATP synthesis</keyword>
<keyword id="KW-1003">Cell membrane</keyword>
<keyword id="KW-0139">CF(1)</keyword>
<keyword id="KW-0375">Hydrogen ion transport</keyword>
<keyword id="KW-0406">Ion transport</keyword>
<keyword id="KW-0472">Membrane</keyword>
<keyword id="KW-0813">Transport</keyword>
<gene>
    <name evidence="1" type="primary">atpH</name>
    <name type="ordered locus">BCA_5453</name>
</gene>
<protein>
    <recommendedName>
        <fullName evidence="1">ATP synthase subunit delta</fullName>
    </recommendedName>
    <alternativeName>
        <fullName evidence="1">ATP synthase F(1) sector subunit delta</fullName>
    </alternativeName>
    <alternativeName>
        <fullName evidence="1">F-type ATPase subunit delta</fullName>
        <shortName evidence="1">F-ATPase subunit delta</shortName>
    </alternativeName>
</protein>
<sequence length="180" mass="20487">MSNGIVAKRYAVALFKIAKEKHVLEMFEEELRLVQNVYEKNGELHSFLTQPNISKEQKKTFLANVFGSVSESILNTLYILIDNKRIDILSDIANEYVVLANEERNVADATVYSTRLLSEEEKLNIAEAFAKRTGKDAIRVKNVVDEDLLGGIKVRIGNRIYDGSLQGKLARIQRELMKNR</sequence>
<organism>
    <name type="scientific">Bacillus cereus (strain 03BB102)</name>
    <dbReference type="NCBI Taxonomy" id="572264"/>
    <lineage>
        <taxon>Bacteria</taxon>
        <taxon>Bacillati</taxon>
        <taxon>Bacillota</taxon>
        <taxon>Bacilli</taxon>
        <taxon>Bacillales</taxon>
        <taxon>Bacillaceae</taxon>
        <taxon>Bacillus</taxon>
        <taxon>Bacillus cereus group</taxon>
    </lineage>
</organism>
<reference key="1">
    <citation type="submission" date="2009-02" db="EMBL/GenBank/DDBJ databases">
        <title>Genome sequence of Bacillus cereus 03BB102.</title>
        <authorList>
            <person name="Dodson R.J."/>
            <person name="Jackson P."/>
            <person name="Munk A.C."/>
            <person name="Brettin T."/>
            <person name="Bruce D."/>
            <person name="Detter C."/>
            <person name="Tapia R."/>
            <person name="Han C."/>
            <person name="Sutton G."/>
            <person name="Sims D."/>
        </authorList>
    </citation>
    <scope>NUCLEOTIDE SEQUENCE [LARGE SCALE GENOMIC DNA]</scope>
    <source>
        <strain>03BB102</strain>
    </source>
</reference>
<proteinExistence type="inferred from homology"/>
<feature type="chain" id="PRO_1000184650" description="ATP synthase subunit delta">
    <location>
        <begin position="1"/>
        <end position="180"/>
    </location>
</feature>
<name>ATPD_BACC3</name>
<comment type="function">
    <text evidence="1">F(1)F(0) ATP synthase produces ATP from ADP in the presence of a proton or sodium gradient. F-type ATPases consist of two structural domains, F(1) containing the extramembraneous catalytic core and F(0) containing the membrane proton channel, linked together by a central stalk and a peripheral stalk. During catalysis, ATP synthesis in the catalytic domain of F(1) is coupled via a rotary mechanism of the central stalk subunits to proton translocation.</text>
</comment>
<comment type="function">
    <text evidence="1">This protein is part of the stalk that links CF(0) to CF(1). It either transmits conformational changes from CF(0) to CF(1) or is implicated in proton conduction.</text>
</comment>
<comment type="subunit">
    <text evidence="1">F-type ATPases have 2 components, F(1) - the catalytic core - and F(0) - the membrane proton channel. F(1) has five subunits: alpha(3), beta(3), gamma(1), delta(1), epsilon(1). F(0) has three main subunits: a(1), b(2) and c(10-14). The alpha and beta chains form an alternating ring which encloses part of the gamma chain. F(1) is attached to F(0) by a central stalk formed by the gamma and epsilon chains, while a peripheral stalk is formed by the delta and b chains.</text>
</comment>
<comment type="subcellular location">
    <subcellularLocation>
        <location evidence="1">Cell membrane</location>
        <topology evidence="1">Peripheral membrane protein</topology>
    </subcellularLocation>
</comment>
<comment type="similarity">
    <text evidence="1">Belongs to the ATPase delta chain family.</text>
</comment>
<evidence type="ECO:0000255" key="1">
    <source>
        <dbReference type="HAMAP-Rule" id="MF_01416"/>
    </source>
</evidence>
<accession>C1F0N1</accession>